<gene>
    <name evidence="6" type="primary">Fam161a</name>
</gene>
<proteinExistence type="evidence at transcript level"/>
<comment type="function">
    <text evidence="1">Involved in ciliogenesis.</text>
</comment>
<comment type="subunit">
    <text evidence="1">Interacts (via central region) with CFAP418 (via N-terminus); the interaction is direct (By similarity). Interacts (via C-terminus) with microtubules (By similarity). Interacts with LCA5 (By similarity). Interacts with CEP290 (By similarity). Interacts with SDCCAG8 (By similarity). Interacts with FAM161B (By similarity). Interacts with POC1B (By similarity). Interacts with CEP78 (By similarity). Forms a microtubule-associated complex with POC5, CETN2 and POC1B (By similarity). Interacts with CCDC15 (By similarity).</text>
</comment>
<comment type="subcellular location">
    <subcellularLocation>
        <location evidence="4">Cytoplasm</location>
        <location evidence="4">Cytoskeleton</location>
        <location evidence="4">Cilium basal body</location>
    </subcellularLocation>
    <subcellularLocation>
        <location evidence="4">Cell projection</location>
        <location evidence="4">Cilium</location>
    </subcellularLocation>
    <subcellularLocation>
        <location evidence="1">Cytoplasm</location>
        <location evidence="1">Cytoskeleton</location>
        <location evidence="1">Microtubule organizing center</location>
        <location evidence="1">Centrosome</location>
        <location evidence="1">Centriole</location>
    </subcellularLocation>
    <text evidence="1 4">Localized in the region between the outer and inner photoreceptor segments, corresponding to the photoreceptor connecting cilium. Localizes to the inner scaffold in the central region of centrioles.</text>
</comment>
<comment type="tissue specificity">
    <text evidence="4">Expressed in the retina and kidney.</text>
</comment>
<comment type="similarity">
    <text evidence="5">Belongs to the FAM161 family.</text>
</comment>
<comment type="sequence caution" evidence="5">
    <conflict type="erroneous initiation">
        <sequence resource="EMBL-CDS" id="AAH79233"/>
    </conflict>
    <text>Truncated N-terminus.</text>
</comment>
<name>F161A_RAT</name>
<evidence type="ECO:0000250" key="1">
    <source>
        <dbReference type="UniProtKB" id="Q3B820"/>
    </source>
</evidence>
<evidence type="ECO:0000255" key="2"/>
<evidence type="ECO:0000256" key="3">
    <source>
        <dbReference type="SAM" id="MobiDB-lite"/>
    </source>
</evidence>
<evidence type="ECO:0000269" key="4">
    <source>
    </source>
</evidence>
<evidence type="ECO:0000305" key="5"/>
<evidence type="ECO:0000312" key="6">
    <source>
        <dbReference type="RGD" id="1304999"/>
    </source>
</evidence>
<organism>
    <name type="scientific">Rattus norvegicus</name>
    <name type="common">Rat</name>
    <dbReference type="NCBI Taxonomy" id="10116"/>
    <lineage>
        <taxon>Eukaryota</taxon>
        <taxon>Metazoa</taxon>
        <taxon>Chordata</taxon>
        <taxon>Craniata</taxon>
        <taxon>Vertebrata</taxon>
        <taxon>Euteleostomi</taxon>
        <taxon>Mammalia</taxon>
        <taxon>Eutheria</taxon>
        <taxon>Euarchontoglires</taxon>
        <taxon>Glires</taxon>
        <taxon>Rodentia</taxon>
        <taxon>Myomorpha</taxon>
        <taxon>Muroidea</taxon>
        <taxon>Muridae</taxon>
        <taxon>Murinae</taxon>
        <taxon>Rattus</taxon>
    </lineage>
</organism>
<sequence length="474" mass="54836">MWQIRASAGCHSSPGKDKEVTLENTMNFSDIYHSDEEYFRKLKDLRAAHAEAMVKLEKMYQDKLTMKDIQAALVGDDSSSSASEKSCSHPALSATSLSEPDLDRSSSLSTTTDELPDLEKKTPGEIGTRSYAKELINNMWNDFSVEDYTQYDSDLQTAKKNRKKPKAWTPRITVPVPFEMTVREQKRREKASDAQETREKMLKRNEDDAECKKKFRANPVPSRLLLPLYEDLVKQNEERRKKTRERSKAALLASQKPFKFIAREEQKQAIREKKLRELCRAKKKPKQFKARPVPRFIYRPPANVKPKREELYGDSRTQPKARDVLQSSPWPSHSTYRAFRDPRSPAMPRGKHRHRRLSPSDQGLEKWKEPFSEQSFRNCPVLCDQCCLYESLCDSNKRQKILADIRMGEEILKETRRPNPSPRHKSPRRSAHASARPCEYSPPMPTASSRGREQAIRRSEKARMKELARIGGAR</sequence>
<keyword id="KW-0966">Cell projection</keyword>
<keyword id="KW-0969">Cilium</keyword>
<keyword id="KW-0970">Cilium biogenesis/degradation</keyword>
<keyword id="KW-0175">Coiled coil</keyword>
<keyword id="KW-0963">Cytoplasm</keyword>
<keyword id="KW-0206">Cytoskeleton</keyword>
<keyword id="KW-1017">Isopeptide bond</keyword>
<keyword id="KW-1185">Reference proteome</keyword>
<keyword id="KW-0832">Ubl conjugation</keyword>
<reference key="1">
    <citation type="journal article" date="2004" name="Genome Res.">
        <title>The status, quality, and expansion of the NIH full-length cDNA project: the Mammalian Gene Collection (MGC).</title>
        <authorList>
            <consortium name="The MGC Project Team"/>
        </authorList>
    </citation>
    <scope>NUCLEOTIDE SEQUENCE [LARGE SCALE MRNA]</scope>
    <source>
        <tissue>Testis</tissue>
    </source>
</reference>
<reference key="2">
    <citation type="journal article" date="2012" name="Hum. Mol. Genet.">
        <title>FAM161A, associated with retinitis pigmentosa, is a component of the cilia-basal body complex and interacts with proteins involved in ciliopathies.</title>
        <authorList>
            <person name="Di Gioia S.A."/>
            <person name="Letteboer S.J."/>
            <person name="Kostic C."/>
            <person name="Bandah-Rozenfeld D."/>
            <person name="Hetterschijt L."/>
            <person name="Sharon D."/>
            <person name="Arsenijevic Y."/>
            <person name="Roepman R."/>
            <person name="Rivolta C."/>
        </authorList>
    </citation>
    <scope>TISSUE SPECIFICITY</scope>
    <scope>SUBCELLULAR LOCATION</scope>
</reference>
<feature type="chain" id="PRO_0000329054" description="Protein FAM161A">
    <location>
        <begin position="1"/>
        <end position="474"/>
    </location>
</feature>
<feature type="region of interest" description="Disordered" evidence="3">
    <location>
        <begin position="78"/>
        <end position="126"/>
    </location>
</feature>
<feature type="region of interest" description="Disordered" evidence="3">
    <location>
        <begin position="185"/>
        <end position="210"/>
    </location>
</feature>
<feature type="region of interest" description="Required for interaction with CFAP418" evidence="1">
    <location>
        <begin position="274"/>
        <end position="454"/>
    </location>
</feature>
<feature type="region of interest" description="Disordered" evidence="3">
    <location>
        <begin position="308"/>
        <end position="364"/>
    </location>
</feature>
<feature type="region of interest" description="Disordered" evidence="3">
    <location>
        <begin position="412"/>
        <end position="474"/>
    </location>
</feature>
<feature type="coiled-coil region" evidence="2">
    <location>
        <begin position="188"/>
        <end position="250"/>
    </location>
</feature>
<feature type="compositionally biased region" description="Polar residues" evidence="3">
    <location>
        <begin position="325"/>
        <end position="335"/>
    </location>
</feature>
<feature type="compositionally biased region" description="Basic residues" evidence="3">
    <location>
        <begin position="422"/>
        <end position="431"/>
    </location>
</feature>
<feature type="compositionally biased region" description="Basic and acidic residues" evidence="3">
    <location>
        <begin position="450"/>
        <end position="468"/>
    </location>
</feature>
<feature type="cross-link" description="Glycyl lysine isopeptide (Lys-Gly) (interchain with G-Cter in SUMO2)" evidence="1">
    <location>
        <position position="397"/>
    </location>
</feature>
<feature type="cross-link" description="Glycyl lysine isopeptide (Lys-Gly) (interchain with G-Cter in SUMO2)" evidence="1">
    <location>
        <position position="413"/>
    </location>
</feature>
<accession>Q6AY14</accession>
<dbReference type="EMBL" id="BC079233">
    <property type="protein sequence ID" value="AAH79233.1"/>
    <property type="status" value="ALT_INIT"/>
    <property type="molecule type" value="mRNA"/>
</dbReference>
<dbReference type="RefSeq" id="NP_001013898.2">
    <property type="nucleotide sequence ID" value="NM_001013876.2"/>
</dbReference>
<dbReference type="SMR" id="Q6AY14"/>
<dbReference type="FunCoup" id="Q6AY14">
    <property type="interactions" value="654"/>
</dbReference>
<dbReference type="STRING" id="10116.ENSRNOP00000013097"/>
<dbReference type="GlyGen" id="Q6AY14">
    <property type="glycosylation" value="1 site"/>
</dbReference>
<dbReference type="PhosphoSitePlus" id="Q6AY14"/>
<dbReference type="PaxDb" id="10116-ENSRNOP00000013097"/>
<dbReference type="GeneID" id="289833"/>
<dbReference type="KEGG" id="rno:289833"/>
<dbReference type="UCSC" id="RGD:1304999">
    <property type="organism name" value="rat"/>
</dbReference>
<dbReference type="AGR" id="RGD:1304999"/>
<dbReference type="CTD" id="84140"/>
<dbReference type="RGD" id="1304999">
    <property type="gene designation" value="Fam161a"/>
</dbReference>
<dbReference type="VEuPathDB" id="HostDB:ENSRNOG00000009881"/>
<dbReference type="eggNOG" id="ENOG502QRC3">
    <property type="taxonomic scope" value="Eukaryota"/>
</dbReference>
<dbReference type="InParanoid" id="Q6AY14"/>
<dbReference type="PhylomeDB" id="Q6AY14"/>
<dbReference type="TreeFam" id="TF321199"/>
<dbReference type="PRO" id="PR:Q6AY14"/>
<dbReference type="Proteomes" id="UP000002494">
    <property type="component" value="Chromosome 14"/>
</dbReference>
<dbReference type="Bgee" id="ENSRNOG00000009881">
    <property type="expression patterns" value="Expressed in testis and 5 other cell types or tissues"/>
</dbReference>
<dbReference type="ExpressionAtlas" id="Q6AY14">
    <property type="expression patterns" value="baseline and differential"/>
</dbReference>
<dbReference type="GO" id="GO:0000235">
    <property type="term" value="C:astral microtubule"/>
    <property type="evidence" value="ECO:0000266"/>
    <property type="project" value="RGD"/>
</dbReference>
<dbReference type="GO" id="GO:0005814">
    <property type="term" value="C:centriole"/>
    <property type="evidence" value="ECO:0000250"/>
    <property type="project" value="UniProtKB"/>
</dbReference>
<dbReference type="GO" id="GO:0005813">
    <property type="term" value="C:centrosome"/>
    <property type="evidence" value="ECO:0000266"/>
    <property type="project" value="RGD"/>
</dbReference>
<dbReference type="GO" id="GO:0036064">
    <property type="term" value="C:ciliary basal body"/>
    <property type="evidence" value="ECO:0000314"/>
    <property type="project" value="UniProtKB"/>
</dbReference>
<dbReference type="GO" id="GO:0072686">
    <property type="term" value="C:mitotic spindle"/>
    <property type="evidence" value="ECO:0000266"/>
    <property type="project" value="RGD"/>
</dbReference>
<dbReference type="GO" id="GO:0097431">
    <property type="term" value="C:mitotic spindle pole"/>
    <property type="evidence" value="ECO:0000266"/>
    <property type="project" value="RGD"/>
</dbReference>
<dbReference type="GO" id="GO:0097733">
    <property type="term" value="C:photoreceptor cell cilium"/>
    <property type="evidence" value="ECO:0000266"/>
    <property type="project" value="RGD"/>
</dbReference>
<dbReference type="GO" id="GO:0032391">
    <property type="term" value="C:photoreceptor connecting cilium"/>
    <property type="evidence" value="ECO:0000314"/>
    <property type="project" value="UniProtKB"/>
</dbReference>
<dbReference type="GO" id="GO:0001917">
    <property type="term" value="C:photoreceptor inner segment"/>
    <property type="evidence" value="ECO:0000266"/>
    <property type="project" value="RGD"/>
</dbReference>
<dbReference type="GO" id="GO:0005876">
    <property type="term" value="C:spindle microtubule"/>
    <property type="evidence" value="ECO:0000266"/>
    <property type="project" value="RGD"/>
</dbReference>
<dbReference type="GO" id="GO:0042802">
    <property type="term" value="F:identical protein binding"/>
    <property type="evidence" value="ECO:0000266"/>
    <property type="project" value="RGD"/>
</dbReference>
<dbReference type="GO" id="GO:0008017">
    <property type="term" value="F:microtubule binding"/>
    <property type="evidence" value="ECO:0000266"/>
    <property type="project" value="RGD"/>
</dbReference>
<dbReference type="GO" id="GO:0060271">
    <property type="term" value="P:cilium assembly"/>
    <property type="evidence" value="ECO:0000250"/>
    <property type="project" value="UniProtKB"/>
</dbReference>
<dbReference type="GO" id="GO:0044782">
    <property type="term" value="P:cilium organization"/>
    <property type="evidence" value="ECO:0000266"/>
    <property type="project" value="RGD"/>
</dbReference>
<dbReference type="InterPro" id="IPR051655">
    <property type="entry name" value="FAM161"/>
</dbReference>
<dbReference type="InterPro" id="IPR019579">
    <property type="entry name" value="FAM161A/B"/>
</dbReference>
<dbReference type="PANTHER" id="PTHR21501">
    <property type="entry name" value="PROTEIN FAM-161"/>
    <property type="match status" value="1"/>
</dbReference>
<dbReference type="PANTHER" id="PTHR21501:SF3">
    <property type="entry name" value="PROTEIN FAM161A"/>
    <property type="match status" value="1"/>
</dbReference>
<dbReference type="Pfam" id="PF10595">
    <property type="entry name" value="FAM161A_B"/>
    <property type="match status" value="1"/>
</dbReference>
<protein>
    <recommendedName>
        <fullName evidence="5">Protein FAM161A</fullName>
    </recommendedName>
</protein>